<proteinExistence type="evidence at protein level"/>
<protein>
    <recommendedName>
        <fullName>Inositol-3-phosphate synthase isozyme 1</fullName>
        <shortName>AtIPS1</shortName>
        <shortName>MIP synthase 1</shortName>
        <ecNumber evidence="4">5.5.1.4</ecNumber>
    </recommendedName>
    <alternativeName>
        <fullName>Myo-inositol 1-phosphate synthase 1</fullName>
        <shortName>AtMIPS 1</shortName>
        <shortName>MI-1-P synthase 1</shortName>
    </alternativeName>
</protein>
<name>INO1_ARATH</name>
<comment type="function">
    <text evidence="4 5">Key enzyme in myo-inositol biosynthesis pathway that catalyzes the conversion of glucose 6-phosphate to 1-myo-inositol 1-phosphate in a NAD-dependent manner (PubMed:20215587). Catalyzes the majority of myo-inositol synthesis required for plant growth and development (PubMed:20215587). Acts as a repressor of programmed cell death and protects plant cells against cell death under high light intensity or long days (PubMed:20215587). Controls its own transcription by inhibiting ATXR6 activity (PubMed:23341037). Reduces the deposition of inhibitory histone marks on its own promoter (PubMed:23341037).</text>
</comment>
<comment type="catalytic activity">
    <reaction evidence="4">
        <text>D-glucose 6-phosphate = 1D-myo-inositol 3-phosphate</text>
        <dbReference type="Rhea" id="RHEA:10716"/>
        <dbReference type="ChEBI" id="CHEBI:58401"/>
        <dbReference type="ChEBI" id="CHEBI:61548"/>
        <dbReference type="EC" id="5.5.1.4"/>
    </reaction>
</comment>
<comment type="cofactor">
    <cofactor evidence="4">
        <name>NAD(+)</name>
        <dbReference type="ChEBI" id="CHEBI:57540"/>
    </cofactor>
</comment>
<comment type="biophysicochemical properties">
    <kinetics>
        <KM evidence="4">0.68 mM for D-glucose 6-phosphate</KM>
        <KM evidence="4">0.46 uM for NAD(+)</KM>
        <text>kcat is 6.4 min(-1) for D-glucose 6-phosphate. kcat is 5.0 min(-1) for NAD(+).</text>
    </kinetics>
</comment>
<comment type="pathway">
    <text>Polyol metabolism; myo-inositol biosynthesis; myo-inositol from D-glucose 6-phosphate: step 1/2.</text>
</comment>
<comment type="subunit">
    <text evidence="3 5">Homotrimer or homotetramer. Interacts with ATXR5 and ATXR6.</text>
</comment>
<comment type="subcellular location">
    <subcellularLocation>
        <location evidence="2 3 4">Cytoplasm</location>
        <location evidence="2 3 4">Cytosol</location>
    </subcellularLocation>
    <subcellularLocation>
        <location evidence="3">Nucleus</location>
    </subcellularLocation>
</comment>
<comment type="tissue specificity">
    <text evidence="2 4">Expressed in siliques, leaves, roots, seed endosperm, but not in embryos. Highest expression in leaves, but restricted to vascular tissue in older leaves.</text>
</comment>
<comment type="induction">
    <text evidence="5">Up-regulated by the IPS1 protein itself. Down-regulate upon flagellin treatment.</text>
</comment>
<comment type="disruption phenotype">
    <text evidence="3 4">Shorter seedlings with deformed cotyledons and altered root cap organization. Spontaneous lesion formation on mature leaves when plants are transferred under long days. Enhanced basal resistance to pathogens and increased sensitivity to abscisic acid during seed germination and root growth.</text>
</comment>
<comment type="similarity">
    <text evidence="6">Belongs to the myo-inositol 1-phosphate synthase family.</text>
</comment>
<comment type="caution">
    <text evidence="7">Was called MIPS2.</text>
</comment>
<organism>
    <name type="scientific">Arabidopsis thaliana</name>
    <name type="common">Mouse-ear cress</name>
    <dbReference type="NCBI Taxonomy" id="3702"/>
    <lineage>
        <taxon>Eukaryota</taxon>
        <taxon>Viridiplantae</taxon>
        <taxon>Streptophyta</taxon>
        <taxon>Embryophyta</taxon>
        <taxon>Tracheophyta</taxon>
        <taxon>Spermatophyta</taxon>
        <taxon>Magnoliopsida</taxon>
        <taxon>eudicotyledons</taxon>
        <taxon>Gunneridae</taxon>
        <taxon>Pentapetalae</taxon>
        <taxon>rosids</taxon>
        <taxon>malvids</taxon>
        <taxon>Brassicales</taxon>
        <taxon>Brassicaceae</taxon>
        <taxon>Camelineae</taxon>
        <taxon>Arabidopsis</taxon>
    </lineage>
</organism>
<reference key="1">
    <citation type="journal article" date="1994" name="Plant Physiol.">
        <title>The Arabidopsis thaliana myo-inositol 1-phosphate synthase (EC 5.5.1.4).</title>
        <authorList>
            <person name="Johnson M.A."/>
        </authorList>
    </citation>
    <scope>NUCLEOTIDE SEQUENCE [MRNA]</scope>
    <source>
        <strain>cv. Columbia</strain>
    </source>
</reference>
<reference key="2">
    <citation type="submission" date="1996-01" db="EMBL/GenBank/DDBJ databases">
        <authorList>
            <person name="Johnson M.A."/>
        </authorList>
    </citation>
    <scope>SEQUENCE REVISION</scope>
</reference>
<reference key="3">
    <citation type="journal article" date="1999" name="Nature">
        <title>Sequence and analysis of chromosome 4 of the plant Arabidopsis thaliana.</title>
        <authorList>
            <person name="Mayer K.F.X."/>
            <person name="Schueller C."/>
            <person name="Wambutt R."/>
            <person name="Murphy G."/>
            <person name="Volckaert G."/>
            <person name="Pohl T."/>
            <person name="Duesterhoeft A."/>
            <person name="Stiekema W."/>
            <person name="Entian K.-D."/>
            <person name="Terryn N."/>
            <person name="Harris B."/>
            <person name="Ansorge W."/>
            <person name="Brandt P."/>
            <person name="Grivell L.A."/>
            <person name="Rieger M."/>
            <person name="Weichselgartner M."/>
            <person name="de Simone V."/>
            <person name="Obermaier B."/>
            <person name="Mache R."/>
            <person name="Mueller M."/>
            <person name="Kreis M."/>
            <person name="Delseny M."/>
            <person name="Puigdomenech P."/>
            <person name="Watson M."/>
            <person name="Schmidtheini T."/>
            <person name="Reichert B."/>
            <person name="Portetelle D."/>
            <person name="Perez-Alonso M."/>
            <person name="Boutry M."/>
            <person name="Bancroft I."/>
            <person name="Vos P."/>
            <person name="Hoheisel J."/>
            <person name="Zimmermann W."/>
            <person name="Wedler H."/>
            <person name="Ridley P."/>
            <person name="Langham S.-A."/>
            <person name="McCullagh B."/>
            <person name="Bilham L."/>
            <person name="Robben J."/>
            <person name="van der Schueren J."/>
            <person name="Grymonprez B."/>
            <person name="Chuang Y.-J."/>
            <person name="Vandenbussche F."/>
            <person name="Braeken M."/>
            <person name="Weltjens I."/>
            <person name="Voet M."/>
            <person name="Bastiaens I."/>
            <person name="Aert R."/>
            <person name="Defoor E."/>
            <person name="Weitzenegger T."/>
            <person name="Bothe G."/>
            <person name="Ramsperger U."/>
            <person name="Hilbert H."/>
            <person name="Braun M."/>
            <person name="Holzer E."/>
            <person name="Brandt A."/>
            <person name="Peters S."/>
            <person name="van Staveren M."/>
            <person name="Dirkse W."/>
            <person name="Mooijman P."/>
            <person name="Klein Lankhorst R."/>
            <person name="Rose M."/>
            <person name="Hauf J."/>
            <person name="Koetter P."/>
            <person name="Berneiser S."/>
            <person name="Hempel S."/>
            <person name="Feldpausch M."/>
            <person name="Lamberth S."/>
            <person name="Van den Daele H."/>
            <person name="De Keyser A."/>
            <person name="Buysshaert C."/>
            <person name="Gielen J."/>
            <person name="Villarroel R."/>
            <person name="De Clercq R."/>
            <person name="van Montagu M."/>
            <person name="Rogers J."/>
            <person name="Cronin A."/>
            <person name="Quail M.A."/>
            <person name="Bray-Allen S."/>
            <person name="Clark L."/>
            <person name="Doggett J."/>
            <person name="Hall S."/>
            <person name="Kay M."/>
            <person name="Lennard N."/>
            <person name="McLay K."/>
            <person name="Mayes R."/>
            <person name="Pettett A."/>
            <person name="Rajandream M.A."/>
            <person name="Lyne M."/>
            <person name="Benes V."/>
            <person name="Rechmann S."/>
            <person name="Borkova D."/>
            <person name="Bloecker H."/>
            <person name="Scharfe M."/>
            <person name="Grimm M."/>
            <person name="Loehnert T.-H."/>
            <person name="Dose S."/>
            <person name="de Haan M."/>
            <person name="Maarse A.C."/>
            <person name="Schaefer M."/>
            <person name="Mueller-Auer S."/>
            <person name="Gabel C."/>
            <person name="Fuchs M."/>
            <person name="Fartmann B."/>
            <person name="Granderath K."/>
            <person name="Dauner D."/>
            <person name="Herzl A."/>
            <person name="Neumann S."/>
            <person name="Argiriou A."/>
            <person name="Vitale D."/>
            <person name="Liguori R."/>
            <person name="Piravandi E."/>
            <person name="Massenet O."/>
            <person name="Quigley F."/>
            <person name="Clabauld G."/>
            <person name="Muendlein A."/>
            <person name="Felber R."/>
            <person name="Schnabl S."/>
            <person name="Hiller R."/>
            <person name="Schmidt W."/>
            <person name="Lecharny A."/>
            <person name="Aubourg S."/>
            <person name="Chefdor F."/>
            <person name="Cooke R."/>
            <person name="Berger C."/>
            <person name="Monfort A."/>
            <person name="Casacuberta E."/>
            <person name="Gibbons T."/>
            <person name="Weber N."/>
            <person name="Vandenbol M."/>
            <person name="Bargues M."/>
            <person name="Terol J."/>
            <person name="Torres A."/>
            <person name="Perez-Perez A."/>
            <person name="Purnelle B."/>
            <person name="Bent E."/>
            <person name="Johnson S."/>
            <person name="Tacon D."/>
            <person name="Jesse T."/>
            <person name="Heijnen L."/>
            <person name="Schwarz S."/>
            <person name="Scholler P."/>
            <person name="Heber S."/>
            <person name="Francs P."/>
            <person name="Bielke C."/>
            <person name="Frishman D."/>
            <person name="Haase D."/>
            <person name="Lemcke K."/>
            <person name="Mewes H.-W."/>
            <person name="Stocker S."/>
            <person name="Zaccaria P."/>
            <person name="Bevan M."/>
            <person name="Wilson R.K."/>
            <person name="de la Bastide M."/>
            <person name="Habermann K."/>
            <person name="Parnell L."/>
            <person name="Dedhia N."/>
            <person name="Gnoj L."/>
            <person name="Schutz K."/>
            <person name="Huang E."/>
            <person name="Spiegel L."/>
            <person name="Sekhon M."/>
            <person name="Murray J."/>
            <person name="Sheet P."/>
            <person name="Cordes M."/>
            <person name="Abu-Threideh J."/>
            <person name="Stoneking T."/>
            <person name="Kalicki J."/>
            <person name="Graves T."/>
            <person name="Harmon G."/>
            <person name="Edwards J."/>
            <person name="Latreille P."/>
            <person name="Courtney L."/>
            <person name="Cloud J."/>
            <person name="Abbott A."/>
            <person name="Scott K."/>
            <person name="Johnson D."/>
            <person name="Minx P."/>
            <person name="Bentley D."/>
            <person name="Fulton B."/>
            <person name="Miller N."/>
            <person name="Greco T."/>
            <person name="Kemp K."/>
            <person name="Kramer J."/>
            <person name="Fulton L."/>
            <person name="Mardis E."/>
            <person name="Dante M."/>
            <person name="Pepin K."/>
            <person name="Hillier L.W."/>
            <person name="Nelson J."/>
            <person name="Spieth J."/>
            <person name="Ryan E."/>
            <person name="Andrews S."/>
            <person name="Geisel C."/>
            <person name="Layman D."/>
            <person name="Du H."/>
            <person name="Ali J."/>
            <person name="Berghoff A."/>
            <person name="Jones K."/>
            <person name="Drone K."/>
            <person name="Cotton M."/>
            <person name="Joshu C."/>
            <person name="Antonoiu B."/>
            <person name="Zidanic M."/>
            <person name="Strong C."/>
            <person name="Sun H."/>
            <person name="Lamar B."/>
            <person name="Yordan C."/>
            <person name="Ma P."/>
            <person name="Zhong J."/>
            <person name="Preston R."/>
            <person name="Vil D."/>
            <person name="Shekher M."/>
            <person name="Matero A."/>
            <person name="Shah R."/>
            <person name="Swaby I.K."/>
            <person name="O'Shaughnessy A."/>
            <person name="Rodriguez M."/>
            <person name="Hoffman J."/>
            <person name="Till S."/>
            <person name="Granat S."/>
            <person name="Shohdy N."/>
            <person name="Hasegawa A."/>
            <person name="Hameed A."/>
            <person name="Lodhi M."/>
            <person name="Johnson A."/>
            <person name="Chen E."/>
            <person name="Marra M.A."/>
            <person name="Martienssen R."/>
            <person name="McCombie W.R."/>
        </authorList>
    </citation>
    <scope>NUCLEOTIDE SEQUENCE [LARGE SCALE GENOMIC DNA]</scope>
    <source>
        <strain>cv. Columbia</strain>
    </source>
</reference>
<reference key="4">
    <citation type="journal article" date="2017" name="Plant J.">
        <title>Araport11: a complete reannotation of the Arabidopsis thaliana reference genome.</title>
        <authorList>
            <person name="Cheng C.Y."/>
            <person name="Krishnakumar V."/>
            <person name="Chan A.P."/>
            <person name="Thibaud-Nissen F."/>
            <person name="Schobel S."/>
            <person name="Town C.D."/>
        </authorList>
    </citation>
    <scope>GENOME REANNOTATION</scope>
    <source>
        <strain>cv. Columbia</strain>
    </source>
</reference>
<reference key="5">
    <citation type="journal article" date="2003" name="Science">
        <title>Empirical analysis of transcriptional activity in the Arabidopsis genome.</title>
        <authorList>
            <person name="Yamada K."/>
            <person name="Lim J."/>
            <person name="Dale J.M."/>
            <person name="Chen H."/>
            <person name="Shinn P."/>
            <person name="Palm C.J."/>
            <person name="Southwick A.M."/>
            <person name="Wu H.C."/>
            <person name="Kim C.J."/>
            <person name="Nguyen M."/>
            <person name="Pham P.K."/>
            <person name="Cheuk R.F."/>
            <person name="Karlin-Newmann G."/>
            <person name="Liu S.X."/>
            <person name="Lam B."/>
            <person name="Sakano H."/>
            <person name="Wu T."/>
            <person name="Yu G."/>
            <person name="Miranda M."/>
            <person name="Quach H.L."/>
            <person name="Tripp M."/>
            <person name="Chang C.H."/>
            <person name="Lee J.M."/>
            <person name="Toriumi M.J."/>
            <person name="Chan M.M."/>
            <person name="Tang C.C."/>
            <person name="Onodera C.S."/>
            <person name="Deng J.M."/>
            <person name="Akiyama K."/>
            <person name="Ansari Y."/>
            <person name="Arakawa T."/>
            <person name="Banh J."/>
            <person name="Banno F."/>
            <person name="Bowser L."/>
            <person name="Brooks S.Y."/>
            <person name="Carninci P."/>
            <person name="Chao Q."/>
            <person name="Choy N."/>
            <person name="Enju A."/>
            <person name="Goldsmith A.D."/>
            <person name="Gurjal M."/>
            <person name="Hansen N.F."/>
            <person name="Hayashizaki Y."/>
            <person name="Johnson-Hopson C."/>
            <person name="Hsuan V.W."/>
            <person name="Iida K."/>
            <person name="Karnes M."/>
            <person name="Khan S."/>
            <person name="Koesema E."/>
            <person name="Ishida J."/>
            <person name="Jiang P.X."/>
            <person name="Jones T."/>
            <person name="Kawai J."/>
            <person name="Kamiya A."/>
            <person name="Meyers C."/>
            <person name="Nakajima M."/>
            <person name="Narusaka M."/>
            <person name="Seki M."/>
            <person name="Sakurai T."/>
            <person name="Satou M."/>
            <person name="Tamse R."/>
            <person name="Vaysberg M."/>
            <person name="Wallender E.K."/>
            <person name="Wong C."/>
            <person name="Yamamura Y."/>
            <person name="Yuan S."/>
            <person name="Shinozaki K."/>
            <person name="Davis R.W."/>
            <person name="Theologis A."/>
            <person name="Ecker J.R."/>
        </authorList>
    </citation>
    <scope>NUCLEOTIDE SEQUENCE [LARGE SCALE MRNA]</scope>
    <source>
        <strain>cv. Columbia</strain>
    </source>
</reference>
<reference key="6">
    <citation type="submission" date="2002-03" db="EMBL/GenBank/DDBJ databases">
        <title>Full-length cDNA from Arabidopsis thaliana.</title>
        <authorList>
            <person name="Brover V.V."/>
            <person name="Troukhan M.E."/>
            <person name="Alexandrov N.A."/>
            <person name="Lu Y.-P."/>
            <person name="Flavell R.B."/>
            <person name="Feldmann K.A."/>
        </authorList>
    </citation>
    <scope>NUCLEOTIDE SEQUENCE [LARGE SCALE MRNA]</scope>
</reference>
<reference key="7">
    <citation type="journal article" date="2008" name="J. Exp. Bot.">
        <title>Localization of myo-inositol-1-phosphate synthase to the endosperm in developing seeds of Arabidopsis.</title>
        <authorList>
            <person name="Mitsuhashi N."/>
            <person name="Kondo M."/>
            <person name="Nakaune S."/>
            <person name="Ohnishi M."/>
            <person name="Hayashi M."/>
            <person name="Hara-Nishimura I."/>
            <person name="Richardson A."/>
            <person name="Fukaki H."/>
            <person name="Nishimura M."/>
            <person name="Mimura T."/>
        </authorList>
    </citation>
    <scope>TISSUE SPECIFICITY</scope>
    <scope>SUBCELLULAR LOCATION</scope>
    <source>
        <strain>cv. Columbia</strain>
    </source>
</reference>
<reference key="8">
    <citation type="journal article" date="2009" name="PLoS ONE">
        <title>Crosstalks between myo-inositol metabolism, programmed cell death and basal immunity in Arabidopsis.</title>
        <authorList>
            <person name="Meng P.H."/>
            <person name="Raynaud C."/>
            <person name="Tcherkez G."/>
            <person name="Blanchet S."/>
            <person name="Massoud K."/>
            <person name="Domenichini S."/>
            <person name="Henry Y."/>
            <person name="Soubigou-Taconnat L."/>
            <person name="Lelarge-Trouverie C."/>
            <person name="Saindrenan P."/>
            <person name="Renou J.P."/>
            <person name="Bergounioux C."/>
        </authorList>
    </citation>
    <scope>INTERACTION WITH ATXR5 AND ATXR6</scope>
    <scope>SUBUNIT</scope>
    <scope>SUBCELLULAR LOCATION</scope>
    <scope>DISRUPTION PHENOTYPE</scope>
</reference>
<reference key="9">
    <citation type="journal article" date="2010" name="Plant Cell">
        <title>The Arabidopsis thaliana Myo-inositol 1-phosphate synthase1 gene is required for Myo-inositol synthesis and suppression of cell death.</title>
        <authorList>
            <person name="Donahue J.L."/>
            <person name="Alford S.R."/>
            <person name="Torabinejad J."/>
            <person name="Kerwin R.E."/>
            <person name="Nourbakhsh A."/>
            <person name="Ray W.K."/>
            <person name="Hernick M."/>
            <person name="Huang X."/>
            <person name="Lyons B.M."/>
            <person name="Hein P.P."/>
            <person name="Gillaspy G.E."/>
        </authorList>
    </citation>
    <scope>FUNCTION</scope>
    <scope>CATALYTIC ACTIVITY</scope>
    <scope>COFACTOR</scope>
    <scope>BIOPHYSICOCHEMICAL PROPERTIES</scope>
    <scope>TISSUE SPECIFICITY</scope>
    <scope>DISRUPTION PHENOTYPE</scope>
    <scope>SUBCELLULAR LOCATION</scope>
</reference>
<reference key="10">
    <citation type="journal article" date="2013" name="Nucleic Acids Res.">
        <title>Dual function of MIPS1 as a metabolic enzyme and transcriptional regulator.</title>
        <authorList>
            <person name="Latrasse D."/>
            <person name="Jegu T."/>
            <person name="Meng P.H."/>
            <person name="Mazubert C."/>
            <person name="Hudik E."/>
            <person name="Delarue M."/>
            <person name="Charon C."/>
            <person name="Crespi M."/>
            <person name="Hirt H."/>
            <person name="Raynaud C."/>
            <person name="Bergounioux C."/>
            <person name="Benhamed M."/>
        </authorList>
    </citation>
    <scope>FUNCTION</scope>
    <scope>SUBCELLULAR LOCATION</scope>
    <scope>INTERACTION WITH ATXR6</scope>
    <scope>INDUCTION BY FLAGELLIN AND IPS1</scope>
</reference>
<accession>P42801</accession>
<accession>O65667</accession>
<feature type="chain" id="PRO_0000195186" description="Inositol-3-phosphate synthase isozyme 1">
    <location>
        <begin position="1"/>
        <end position="511"/>
    </location>
</feature>
<feature type="binding site" evidence="1">
    <location>
        <position position="71"/>
    </location>
    <ligand>
        <name>NAD(+)</name>
        <dbReference type="ChEBI" id="CHEBI:57540"/>
    </ligand>
</feature>
<feature type="binding site" evidence="1">
    <location>
        <position position="72"/>
    </location>
    <ligand>
        <name>NAD(+)</name>
        <dbReference type="ChEBI" id="CHEBI:57540"/>
    </ligand>
</feature>
<feature type="binding site" evidence="1">
    <location>
        <position position="73"/>
    </location>
    <ligand>
        <name>NAD(+)</name>
        <dbReference type="ChEBI" id="CHEBI:57540"/>
    </ligand>
</feature>
<feature type="binding site" evidence="1">
    <location>
        <position position="74"/>
    </location>
    <ligand>
        <name>NAD(+)</name>
        <dbReference type="ChEBI" id="CHEBI:57540"/>
    </ligand>
</feature>
<feature type="binding site" evidence="1">
    <location>
        <position position="144"/>
    </location>
    <ligand>
        <name>NAD(+)</name>
        <dbReference type="ChEBI" id="CHEBI:57540"/>
    </ligand>
</feature>
<feature type="binding site" evidence="1">
    <location>
        <position position="181"/>
    </location>
    <ligand>
        <name>NAD(+)</name>
        <dbReference type="ChEBI" id="CHEBI:57540"/>
    </ligand>
</feature>
<feature type="binding site" evidence="1">
    <location>
        <position position="191"/>
    </location>
    <ligand>
        <name>NAD(+)</name>
        <dbReference type="ChEBI" id="CHEBI:57540"/>
    </ligand>
</feature>
<feature type="binding site" evidence="1">
    <location>
        <position position="194"/>
    </location>
    <ligand>
        <name>NAD(+)</name>
        <dbReference type="ChEBI" id="CHEBI:57540"/>
    </ligand>
</feature>
<feature type="binding site" evidence="1">
    <location>
        <position position="231"/>
    </location>
    <ligand>
        <name>NAD(+)</name>
        <dbReference type="ChEBI" id="CHEBI:57540"/>
    </ligand>
</feature>
<feature type="binding site" evidence="1">
    <location>
        <position position="232"/>
    </location>
    <ligand>
        <name>NAD(+)</name>
        <dbReference type="ChEBI" id="CHEBI:57540"/>
    </ligand>
</feature>
<feature type="binding site" evidence="1">
    <location>
        <position position="233"/>
    </location>
    <ligand>
        <name>NAD(+)</name>
        <dbReference type="ChEBI" id="CHEBI:57540"/>
    </ligand>
</feature>
<feature type="binding site" evidence="1">
    <location>
        <position position="234"/>
    </location>
    <ligand>
        <name>NAD(+)</name>
        <dbReference type="ChEBI" id="CHEBI:57540"/>
    </ligand>
</feature>
<feature type="binding site" evidence="1">
    <location>
        <position position="282"/>
    </location>
    <ligand>
        <name>NAD(+)</name>
        <dbReference type="ChEBI" id="CHEBI:57540"/>
    </ligand>
</feature>
<feature type="binding site" evidence="1">
    <location>
        <position position="283"/>
    </location>
    <ligand>
        <name>NAD(+)</name>
        <dbReference type="ChEBI" id="CHEBI:57540"/>
    </ligand>
</feature>
<feature type="binding site" evidence="1">
    <location>
        <position position="307"/>
    </location>
    <ligand>
        <name>NAD(+)</name>
        <dbReference type="ChEBI" id="CHEBI:57540"/>
    </ligand>
</feature>
<feature type="binding site" evidence="1">
    <location>
        <position position="310"/>
    </location>
    <ligand>
        <name>NAD(+)</name>
        <dbReference type="ChEBI" id="CHEBI:57540"/>
    </ligand>
</feature>
<feature type="binding site" evidence="1">
    <location>
        <position position="341"/>
    </location>
    <ligand>
        <name>NAD(+)</name>
        <dbReference type="ChEBI" id="CHEBI:57540"/>
    </ligand>
</feature>
<feature type="binding site" evidence="1">
    <location>
        <position position="342"/>
    </location>
    <ligand>
        <name>NAD(+)</name>
        <dbReference type="ChEBI" id="CHEBI:57540"/>
    </ligand>
</feature>
<feature type="binding site" evidence="1">
    <location>
        <position position="343"/>
    </location>
    <ligand>
        <name>NAD(+)</name>
        <dbReference type="ChEBI" id="CHEBI:57540"/>
    </ligand>
</feature>
<feature type="binding site" evidence="1">
    <location>
        <position position="356"/>
    </location>
    <ligand>
        <name>NAD(+)</name>
        <dbReference type="ChEBI" id="CHEBI:57540"/>
    </ligand>
</feature>
<feature type="binding site" evidence="1">
    <location>
        <position position="394"/>
    </location>
    <ligand>
        <name>NAD(+)</name>
        <dbReference type="ChEBI" id="CHEBI:57540"/>
    </ligand>
</feature>
<feature type="binding site" evidence="1">
    <location>
        <position position="395"/>
    </location>
    <ligand>
        <name>NAD(+)</name>
        <dbReference type="ChEBI" id="CHEBI:57540"/>
    </ligand>
</feature>
<feature type="binding site" evidence="1">
    <location>
        <position position="423"/>
    </location>
    <ligand>
        <name>NAD(+)</name>
        <dbReference type="ChEBI" id="CHEBI:57540"/>
    </ligand>
</feature>
<feature type="binding site" evidence="1">
    <location>
        <position position="424"/>
    </location>
    <ligand>
        <name>NAD(+)</name>
        <dbReference type="ChEBI" id="CHEBI:57540"/>
    </ligand>
</feature>
<feature type="sequence conflict" description="In Ref. 1; AAA85390." evidence="6" ref="1">
    <original>EI</original>
    <variation>GD</variation>
    <location>
        <begin position="357"/>
        <end position="358"/>
    </location>
</feature>
<evidence type="ECO:0000250" key="1">
    <source>
        <dbReference type="UniProtKB" id="P11986"/>
    </source>
</evidence>
<evidence type="ECO:0000269" key="2">
    <source>
    </source>
</evidence>
<evidence type="ECO:0000269" key="3">
    <source>
    </source>
</evidence>
<evidence type="ECO:0000269" key="4">
    <source>
    </source>
</evidence>
<evidence type="ECO:0000269" key="5">
    <source>
    </source>
</evidence>
<evidence type="ECO:0000305" key="6"/>
<evidence type="ECO:0000305" key="7">
    <source>
    </source>
</evidence>
<gene>
    <name type="primary">IPS1</name>
    <name type="synonym">MIPS1</name>
    <name type="ordered locus">At4g39800</name>
    <name type="ORF">T19P19.190</name>
</gene>
<sequence length="511" mass="56515">MFIESFKVESPNVKYTENEIHSVYDYETTEVVHEKTVNGTYQWIVKPKTVKYDFKTDIRVPKLGVMLVGLGGNNGSTLTAGVIANKEGISWATKDKVQQANYFGSLTQASSIRVGSFNGEEIYAPFKSLLPMVNPDDVVFGGWDISDMNLADAMARARVLDIDLQKQLRPYMENIVPLPGIFDPDFIAANQGSRANHVIKGTKKEQVDHIIKDMREFKEKNKVDKVVVLWTANTERYSNVVVGMNDTMENLMESVDRDEAEISPSTLYAIACVLEGIPFINGSPQNTFVPGLIDMAIRNNVLIGGDDFKSGQTKMKSVLVDFLVGAGIKPTSIVSYNHLGNNDGMNLSAPQTFRSKEISKSNVVDDMVASNGILFEPGEHPDHVVVIKYVPYVADSKRAMDEYTSEIFMGGKNTIVMHNTCEDSLLAAPIILDLVLLAELSTRIQFKSEGEGKFHSFHPVATILSYLTKAPLVPPGTPVINALSKQRAMLENIMRACVGLAPENNMIMEFK</sequence>
<dbReference type="EC" id="5.5.1.4" evidence="4"/>
<dbReference type="EMBL" id="U04876">
    <property type="protein sequence ID" value="AAA85390.1"/>
    <property type="molecule type" value="mRNA"/>
</dbReference>
<dbReference type="EMBL" id="AL022605">
    <property type="protein sequence ID" value="CAA18766.1"/>
    <property type="molecule type" value="Genomic_DNA"/>
</dbReference>
<dbReference type="EMBL" id="AL161595">
    <property type="protein sequence ID" value="CAB80643.1"/>
    <property type="molecule type" value="Genomic_DNA"/>
</dbReference>
<dbReference type="EMBL" id="CP002687">
    <property type="protein sequence ID" value="AEE87121.1"/>
    <property type="molecule type" value="Genomic_DNA"/>
</dbReference>
<dbReference type="EMBL" id="AF372954">
    <property type="protein sequence ID" value="AAK50093.1"/>
    <property type="molecule type" value="mRNA"/>
</dbReference>
<dbReference type="EMBL" id="BT001931">
    <property type="protein sequence ID" value="AAN71930.1"/>
    <property type="molecule type" value="mRNA"/>
</dbReference>
<dbReference type="EMBL" id="AY085931">
    <property type="protein sequence ID" value="AAM63143.1"/>
    <property type="molecule type" value="mRNA"/>
</dbReference>
<dbReference type="PIR" id="T05017">
    <property type="entry name" value="T05017"/>
</dbReference>
<dbReference type="RefSeq" id="NP_195690.1">
    <property type="nucleotide sequence ID" value="NM_120143.4"/>
</dbReference>
<dbReference type="SMR" id="P42801"/>
<dbReference type="BioGRID" id="15419">
    <property type="interactions" value="4"/>
</dbReference>
<dbReference type="FunCoup" id="P42801">
    <property type="interactions" value="2023"/>
</dbReference>
<dbReference type="IntAct" id="P42801">
    <property type="interactions" value="2"/>
</dbReference>
<dbReference type="STRING" id="3702.P42801"/>
<dbReference type="MoonProt" id="P42801"/>
<dbReference type="PaxDb" id="3702-AT4G39800.1"/>
<dbReference type="ProteomicsDB" id="248458"/>
<dbReference type="EnsemblPlants" id="AT4G39800.1">
    <property type="protein sequence ID" value="AT4G39800.1"/>
    <property type="gene ID" value="AT4G39800"/>
</dbReference>
<dbReference type="GeneID" id="830139"/>
<dbReference type="Gramene" id="AT4G39800.1">
    <property type="protein sequence ID" value="AT4G39800.1"/>
    <property type="gene ID" value="AT4G39800"/>
</dbReference>
<dbReference type="KEGG" id="ath:AT4G39800"/>
<dbReference type="Araport" id="AT4G39800"/>
<dbReference type="TAIR" id="AT4G39800">
    <property type="gene designation" value="MIPS1"/>
</dbReference>
<dbReference type="eggNOG" id="KOG0693">
    <property type="taxonomic scope" value="Eukaryota"/>
</dbReference>
<dbReference type="HOGENOM" id="CLU_021486_2_0_1"/>
<dbReference type="InParanoid" id="P42801"/>
<dbReference type="OMA" id="MNDTMEN"/>
<dbReference type="OrthoDB" id="2887at2759"/>
<dbReference type="PhylomeDB" id="P42801"/>
<dbReference type="BioCyc" id="ARA:AT4G39800-MONOMER"/>
<dbReference type="BRENDA" id="5.5.1.4">
    <property type="organism ID" value="399"/>
</dbReference>
<dbReference type="SABIO-RK" id="P42801"/>
<dbReference type="UniPathway" id="UPA00823">
    <property type="reaction ID" value="UER00787"/>
</dbReference>
<dbReference type="PRO" id="PR:P42801"/>
<dbReference type="Proteomes" id="UP000006548">
    <property type="component" value="Chromosome 4"/>
</dbReference>
<dbReference type="ExpressionAtlas" id="P42801">
    <property type="expression patterns" value="baseline and differential"/>
</dbReference>
<dbReference type="GO" id="GO:0005737">
    <property type="term" value="C:cytoplasm"/>
    <property type="evidence" value="ECO:0000314"/>
    <property type="project" value="TAIR"/>
</dbReference>
<dbReference type="GO" id="GO:0005829">
    <property type="term" value="C:cytosol"/>
    <property type="evidence" value="ECO:0007669"/>
    <property type="project" value="UniProtKB-SubCell"/>
</dbReference>
<dbReference type="GO" id="GO:0005634">
    <property type="term" value="C:nucleus"/>
    <property type="evidence" value="ECO:0007669"/>
    <property type="project" value="UniProtKB-SubCell"/>
</dbReference>
<dbReference type="GO" id="GO:0004512">
    <property type="term" value="F:inositol-3-phosphate synthase activity"/>
    <property type="evidence" value="ECO:0000314"/>
    <property type="project" value="TAIR"/>
</dbReference>
<dbReference type="GO" id="GO:0009793">
    <property type="term" value="P:embryo development ending in seed dormancy"/>
    <property type="evidence" value="ECO:0000316"/>
    <property type="project" value="TAIR"/>
</dbReference>
<dbReference type="GO" id="GO:0006021">
    <property type="term" value="P:inositol biosynthetic process"/>
    <property type="evidence" value="ECO:0000314"/>
    <property type="project" value="TAIR"/>
</dbReference>
<dbReference type="GO" id="GO:0010264">
    <property type="term" value="P:myo-inositol hexakisphosphate biosynthetic process"/>
    <property type="evidence" value="ECO:0000315"/>
    <property type="project" value="TAIR"/>
</dbReference>
<dbReference type="GO" id="GO:0006659">
    <property type="term" value="P:phosphatidylserine biosynthetic process"/>
    <property type="evidence" value="ECO:0000315"/>
    <property type="project" value="TAIR"/>
</dbReference>
<dbReference type="GO" id="GO:0009791">
    <property type="term" value="P:post-embryonic development"/>
    <property type="evidence" value="ECO:0000315"/>
    <property type="project" value="TAIR"/>
</dbReference>
<dbReference type="FunFam" id="3.30.360.10:FF:000040">
    <property type="entry name" value="Inositol 1-phosphate synthase"/>
    <property type="match status" value="1"/>
</dbReference>
<dbReference type="FunFam" id="3.40.50.720:FF:000107">
    <property type="entry name" value="inositol-3-phosphate synthase"/>
    <property type="match status" value="1"/>
</dbReference>
<dbReference type="FunFam" id="3.40.50.720:FF:000069">
    <property type="entry name" value="Inositol-3-phosphate synthase 1"/>
    <property type="match status" value="1"/>
</dbReference>
<dbReference type="Gene3D" id="3.40.50.720">
    <property type="entry name" value="NAD(P)-binding Rossmann-like Domain"/>
    <property type="match status" value="2"/>
</dbReference>
<dbReference type="InterPro" id="IPR002587">
    <property type="entry name" value="Myo-inos-1-P_Synthase"/>
</dbReference>
<dbReference type="InterPro" id="IPR013021">
    <property type="entry name" value="Myo-inos-1-P_Synthase_GAPDH"/>
</dbReference>
<dbReference type="InterPro" id="IPR036291">
    <property type="entry name" value="NAD(P)-bd_dom_sf"/>
</dbReference>
<dbReference type="PANTHER" id="PTHR11510">
    <property type="entry name" value="MYO-INOSITOL-1 PHOSPHATE SYNTHASE"/>
    <property type="match status" value="1"/>
</dbReference>
<dbReference type="Pfam" id="PF01658">
    <property type="entry name" value="Inos-1-P_synth"/>
    <property type="match status" value="1"/>
</dbReference>
<dbReference type="Pfam" id="PF07994">
    <property type="entry name" value="NAD_binding_5"/>
    <property type="match status" value="1"/>
</dbReference>
<dbReference type="PIRSF" id="PIRSF015578">
    <property type="entry name" value="Myoinos-ppht_syn"/>
    <property type="match status" value="1"/>
</dbReference>
<dbReference type="SUPFAM" id="SSF55347">
    <property type="entry name" value="Glyceraldehyde-3-phosphate dehydrogenase-like, C-terminal domain"/>
    <property type="match status" value="1"/>
</dbReference>
<dbReference type="SUPFAM" id="SSF51735">
    <property type="entry name" value="NAD(P)-binding Rossmann-fold domains"/>
    <property type="match status" value="1"/>
</dbReference>
<keyword id="KW-0963">Cytoplasm</keyword>
<keyword id="KW-0398">Inositol biosynthesis</keyword>
<keyword id="KW-0413">Isomerase</keyword>
<keyword id="KW-0444">Lipid biosynthesis</keyword>
<keyword id="KW-0443">Lipid metabolism</keyword>
<keyword id="KW-0520">NAD</keyword>
<keyword id="KW-0539">Nucleus</keyword>
<keyword id="KW-0594">Phospholipid biosynthesis</keyword>
<keyword id="KW-1208">Phospholipid metabolism</keyword>
<keyword id="KW-1185">Reference proteome</keyword>